<name>RNC_LISW6</name>
<sequence>MNQWEELQESVGFDFQDVELLKQAFTHSSYVNEHRRENVKDNERLEFLGDAVLELTVSNYLFNKYPDMAEGHMTKMRAAIVCEPSLVEFAEAIHFSKYIRLGKGEEKAGGRTRPALLADVFESFIGALYLDNGIDKVVTFLERVIFPKIDAGEYLQTVDYKTQLQEIVQRDRDVLIEYDILGETGPAHNKAFDAQVIVNGQVLGKGSGRTKKQAEQSAAQFAINQLTHR</sequence>
<gene>
    <name evidence="1" type="primary">rnc</name>
    <name type="ordered locus">lwe1824</name>
</gene>
<reference key="1">
    <citation type="journal article" date="2006" name="J. Bacteriol.">
        <title>Whole-genome sequence of Listeria welshimeri reveals common steps in genome reduction with Listeria innocua as compared to Listeria monocytogenes.</title>
        <authorList>
            <person name="Hain T."/>
            <person name="Steinweg C."/>
            <person name="Kuenne C.T."/>
            <person name="Billion A."/>
            <person name="Ghai R."/>
            <person name="Chatterjee S.S."/>
            <person name="Domann E."/>
            <person name="Kaerst U."/>
            <person name="Goesmann A."/>
            <person name="Bekel T."/>
            <person name="Bartels D."/>
            <person name="Kaiser O."/>
            <person name="Meyer F."/>
            <person name="Puehler A."/>
            <person name="Weisshaar B."/>
            <person name="Wehland J."/>
            <person name="Liang C."/>
            <person name="Dandekar T."/>
            <person name="Lampidis R."/>
            <person name="Kreft J."/>
            <person name="Goebel W."/>
            <person name="Chakraborty T."/>
        </authorList>
    </citation>
    <scope>NUCLEOTIDE SEQUENCE [LARGE SCALE GENOMIC DNA]</scope>
    <source>
        <strain>ATCC 35897 / DSM 20650 / CCUG 15529 / CIP 8149 / NCTC 11857 / SLCC 5334 / V8</strain>
    </source>
</reference>
<feature type="chain" id="PRO_1000075776" description="Ribonuclease 3">
    <location>
        <begin position="1"/>
        <end position="229"/>
    </location>
</feature>
<feature type="domain" description="RNase III" evidence="1">
    <location>
        <begin position="4"/>
        <end position="133"/>
    </location>
</feature>
<feature type="domain" description="DRBM" evidence="1">
    <location>
        <begin position="159"/>
        <end position="228"/>
    </location>
</feature>
<feature type="active site" evidence="1">
    <location>
        <position position="50"/>
    </location>
</feature>
<feature type="active site" evidence="1">
    <location>
        <position position="122"/>
    </location>
</feature>
<feature type="binding site" evidence="1">
    <location>
        <position position="46"/>
    </location>
    <ligand>
        <name>Mg(2+)</name>
        <dbReference type="ChEBI" id="CHEBI:18420"/>
    </ligand>
</feature>
<feature type="binding site" evidence="1">
    <location>
        <position position="119"/>
    </location>
    <ligand>
        <name>Mg(2+)</name>
        <dbReference type="ChEBI" id="CHEBI:18420"/>
    </ligand>
</feature>
<feature type="binding site" evidence="1">
    <location>
        <position position="122"/>
    </location>
    <ligand>
        <name>Mg(2+)</name>
        <dbReference type="ChEBI" id="CHEBI:18420"/>
    </ligand>
</feature>
<organism>
    <name type="scientific">Listeria welshimeri serovar 6b (strain ATCC 35897 / DSM 20650 / CCUG 15529 / CIP 8149 / NCTC 11857 / SLCC 5334 / V8)</name>
    <dbReference type="NCBI Taxonomy" id="386043"/>
    <lineage>
        <taxon>Bacteria</taxon>
        <taxon>Bacillati</taxon>
        <taxon>Bacillota</taxon>
        <taxon>Bacilli</taxon>
        <taxon>Bacillales</taxon>
        <taxon>Listeriaceae</taxon>
        <taxon>Listeria</taxon>
    </lineage>
</organism>
<protein>
    <recommendedName>
        <fullName evidence="1">Ribonuclease 3</fullName>
        <ecNumber evidence="1">3.1.26.3</ecNumber>
    </recommendedName>
    <alternativeName>
        <fullName evidence="1">Ribonuclease III</fullName>
        <shortName evidence="1">RNase III</shortName>
    </alternativeName>
</protein>
<keyword id="KW-0963">Cytoplasm</keyword>
<keyword id="KW-0255">Endonuclease</keyword>
<keyword id="KW-0378">Hydrolase</keyword>
<keyword id="KW-0460">Magnesium</keyword>
<keyword id="KW-0479">Metal-binding</keyword>
<keyword id="KW-0507">mRNA processing</keyword>
<keyword id="KW-0540">Nuclease</keyword>
<keyword id="KW-0694">RNA-binding</keyword>
<keyword id="KW-0698">rRNA processing</keyword>
<keyword id="KW-0699">rRNA-binding</keyword>
<keyword id="KW-0819">tRNA processing</keyword>
<proteinExistence type="inferred from homology"/>
<evidence type="ECO:0000255" key="1">
    <source>
        <dbReference type="HAMAP-Rule" id="MF_00104"/>
    </source>
</evidence>
<dbReference type="EC" id="3.1.26.3" evidence="1"/>
<dbReference type="EMBL" id="AM263198">
    <property type="protein sequence ID" value="CAK21242.1"/>
    <property type="molecule type" value="Genomic_DNA"/>
</dbReference>
<dbReference type="RefSeq" id="WP_011702596.1">
    <property type="nucleotide sequence ID" value="NC_008555.1"/>
</dbReference>
<dbReference type="SMR" id="A0AJR0"/>
<dbReference type="STRING" id="386043.lwe1824"/>
<dbReference type="GeneID" id="61189725"/>
<dbReference type="KEGG" id="lwe:lwe1824"/>
<dbReference type="eggNOG" id="COG0571">
    <property type="taxonomic scope" value="Bacteria"/>
</dbReference>
<dbReference type="HOGENOM" id="CLU_000907_1_3_9"/>
<dbReference type="OrthoDB" id="9805026at2"/>
<dbReference type="Proteomes" id="UP000000779">
    <property type="component" value="Chromosome"/>
</dbReference>
<dbReference type="GO" id="GO:0005737">
    <property type="term" value="C:cytoplasm"/>
    <property type="evidence" value="ECO:0007669"/>
    <property type="project" value="UniProtKB-SubCell"/>
</dbReference>
<dbReference type="GO" id="GO:0003725">
    <property type="term" value="F:double-stranded RNA binding"/>
    <property type="evidence" value="ECO:0007669"/>
    <property type="project" value="TreeGrafter"/>
</dbReference>
<dbReference type="GO" id="GO:0046872">
    <property type="term" value="F:metal ion binding"/>
    <property type="evidence" value="ECO:0007669"/>
    <property type="project" value="UniProtKB-KW"/>
</dbReference>
<dbReference type="GO" id="GO:0004525">
    <property type="term" value="F:ribonuclease III activity"/>
    <property type="evidence" value="ECO:0007669"/>
    <property type="project" value="UniProtKB-UniRule"/>
</dbReference>
<dbReference type="GO" id="GO:0019843">
    <property type="term" value="F:rRNA binding"/>
    <property type="evidence" value="ECO:0007669"/>
    <property type="project" value="UniProtKB-KW"/>
</dbReference>
<dbReference type="GO" id="GO:0006397">
    <property type="term" value="P:mRNA processing"/>
    <property type="evidence" value="ECO:0007669"/>
    <property type="project" value="UniProtKB-UniRule"/>
</dbReference>
<dbReference type="GO" id="GO:0010468">
    <property type="term" value="P:regulation of gene expression"/>
    <property type="evidence" value="ECO:0007669"/>
    <property type="project" value="TreeGrafter"/>
</dbReference>
<dbReference type="GO" id="GO:0006364">
    <property type="term" value="P:rRNA processing"/>
    <property type="evidence" value="ECO:0007669"/>
    <property type="project" value="UniProtKB-UniRule"/>
</dbReference>
<dbReference type="GO" id="GO:0008033">
    <property type="term" value="P:tRNA processing"/>
    <property type="evidence" value="ECO:0007669"/>
    <property type="project" value="UniProtKB-KW"/>
</dbReference>
<dbReference type="CDD" id="cd10845">
    <property type="entry name" value="DSRM_RNAse_III_family"/>
    <property type="match status" value="1"/>
</dbReference>
<dbReference type="CDD" id="cd00593">
    <property type="entry name" value="RIBOc"/>
    <property type="match status" value="1"/>
</dbReference>
<dbReference type="FunFam" id="1.10.1520.10:FF:000001">
    <property type="entry name" value="Ribonuclease 3"/>
    <property type="match status" value="1"/>
</dbReference>
<dbReference type="FunFam" id="3.30.160.20:FF:000003">
    <property type="entry name" value="Ribonuclease 3"/>
    <property type="match status" value="1"/>
</dbReference>
<dbReference type="Gene3D" id="3.30.160.20">
    <property type="match status" value="1"/>
</dbReference>
<dbReference type="Gene3D" id="1.10.1520.10">
    <property type="entry name" value="Ribonuclease III domain"/>
    <property type="match status" value="1"/>
</dbReference>
<dbReference type="HAMAP" id="MF_00104">
    <property type="entry name" value="RNase_III"/>
    <property type="match status" value="1"/>
</dbReference>
<dbReference type="InterPro" id="IPR014720">
    <property type="entry name" value="dsRBD_dom"/>
</dbReference>
<dbReference type="InterPro" id="IPR011907">
    <property type="entry name" value="RNase_III"/>
</dbReference>
<dbReference type="InterPro" id="IPR000999">
    <property type="entry name" value="RNase_III_dom"/>
</dbReference>
<dbReference type="InterPro" id="IPR036389">
    <property type="entry name" value="RNase_III_sf"/>
</dbReference>
<dbReference type="NCBIfam" id="TIGR02191">
    <property type="entry name" value="RNaseIII"/>
    <property type="match status" value="1"/>
</dbReference>
<dbReference type="PANTHER" id="PTHR11207:SF0">
    <property type="entry name" value="RIBONUCLEASE 3"/>
    <property type="match status" value="1"/>
</dbReference>
<dbReference type="PANTHER" id="PTHR11207">
    <property type="entry name" value="RIBONUCLEASE III"/>
    <property type="match status" value="1"/>
</dbReference>
<dbReference type="Pfam" id="PF00035">
    <property type="entry name" value="dsrm"/>
    <property type="match status" value="1"/>
</dbReference>
<dbReference type="Pfam" id="PF14622">
    <property type="entry name" value="Ribonucleas_3_3"/>
    <property type="match status" value="1"/>
</dbReference>
<dbReference type="SMART" id="SM00358">
    <property type="entry name" value="DSRM"/>
    <property type="match status" value="1"/>
</dbReference>
<dbReference type="SMART" id="SM00535">
    <property type="entry name" value="RIBOc"/>
    <property type="match status" value="1"/>
</dbReference>
<dbReference type="SUPFAM" id="SSF54768">
    <property type="entry name" value="dsRNA-binding domain-like"/>
    <property type="match status" value="1"/>
</dbReference>
<dbReference type="SUPFAM" id="SSF69065">
    <property type="entry name" value="RNase III domain-like"/>
    <property type="match status" value="1"/>
</dbReference>
<dbReference type="PROSITE" id="PS50137">
    <property type="entry name" value="DS_RBD"/>
    <property type="match status" value="1"/>
</dbReference>
<dbReference type="PROSITE" id="PS00517">
    <property type="entry name" value="RNASE_3_1"/>
    <property type="match status" value="1"/>
</dbReference>
<dbReference type="PROSITE" id="PS50142">
    <property type="entry name" value="RNASE_3_2"/>
    <property type="match status" value="1"/>
</dbReference>
<comment type="function">
    <text evidence="1">Digests double-stranded RNA. Involved in the processing of primary rRNA transcript to yield the immediate precursors to the large and small rRNAs (23S and 16S). Processes some mRNAs, and tRNAs when they are encoded in the rRNA operon. Processes pre-crRNA and tracrRNA of type II CRISPR loci if present in the organism.</text>
</comment>
<comment type="catalytic activity">
    <reaction evidence="1">
        <text>Endonucleolytic cleavage to 5'-phosphomonoester.</text>
        <dbReference type="EC" id="3.1.26.3"/>
    </reaction>
</comment>
<comment type="cofactor">
    <cofactor evidence="1">
        <name>Mg(2+)</name>
        <dbReference type="ChEBI" id="CHEBI:18420"/>
    </cofactor>
</comment>
<comment type="subunit">
    <text evidence="1">Homodimer.</text>
</comment>
<comment type="subcellular location">
    <subcellularLocation>
        <location evidence="1">Cytoplasm</location>
    </subcellularLocation>
</comment>
<comment type="similarity">
    <text evidence="1">Belongs to the ribonuclease III family.</text>
</comment>
<accession>A0AJR0</accession>